<reference key="1">
    <citation type="journal article" date="1997" name="Cancer Res.">
        <title>Identification of a breast cancer-specific gene, BCSG1, by direct differential cDNA sequencing.</title>
        <authorList>
            <person name="Ji H."/>
            <person name="Liu Y.E."/>
            <person name="Jia T."/>
            <person name="Wang M."/>
            <person name="Liu J."/>
            <person name="Xiao G."/>
            <person name="Joseph B.K."/>
            <person name="Rosen C."/>
            <person name="Shi Y.E."/>
        </authorList>
    </citation>
    <scope>NUCLEOTIDE SEQUENCE [MRNA]</scope>
    <source>
        <tissue>Mammary cancer</tissue>
    </source>
</reference>
<reference key="2">
    <citation type="journal article" date="1998" name="Hum. Mol. Genet.">
        <title>Organization, expression and polymorphism of the human persyn gene.</title>
        <authorList>
            <person name="Ninkina N.N."/>
            <person name="Alimova-Kost M.V."/>
            <person name="Paterson J.W.E."/>
            <person name="Delaney L."/>
            <person name="Cohen B.B."/>
            <person name="Imreh S."/>
            <person name="Gnuchev N.V."/>
            <person name="Davies A.M."/>
            <person name="Buchman V.L."/>
        </authorList>
    </citation>
    <scope>NUCLEOTIDE SEQUENCE [GENOMIC DNA / MRNA]</scope>
</reference>
<reference key="3">
    <citation type="journal article" date="1998" name="Hum. Genet.">
        <title>Identification, localization and characterization of the human gamma-synuclein gene.</title>
        <authorList>
            <person name="Lavedan C."/>
            <person name="Leroy E."/>
            <person name="Dehejia A."/>
            <person name="Buchholtz S."/>
            <person name="Dutra A."/>
            <person name="Nussbaum R.L."/>
            <person name="Polymeropoulos M.H."/>
        </authorList>
    </citation>
    <scope>NUCLEOTIDE SEQUENCE [GENOMIC DNA]</scope>
    <scope>VARIANT VAL-110</scope>
</reference>
<reference key="4">
    <citation type="submission" date="2001-08" db="EMBL/GenBank/DDBJ databases">
        <authorList>
            <person name="Han C."/>
            <person name="Zhang B."/>
            <person name="Peng X."/>
            <person name="Yuan J."/>
            <person name="Qiang B."/>
        </authorList>
    </citation>
    <scope>NUCLEOTIDE SEQUENCE [MRNA]</scope>
</reference>
<reference key="5">
    <citation type="journal article" date="2004" name="Genome Res.">
        <title>The status, quality, and expansion of the NIH full-length cDNA project: the Mammalian Gene Collection (MGC).</title>
        <authorList>
            <consortium name="The MGC Project Team"/>
        </authorList>
    </citation>
    <scope>NUCLEOTIDE SEQUENCE [LARGE SCALE MRNA]</scope>
    <scope>VARIANT VAL-110</scope>
    <source>
        <tissue>Colon</tissue>
    </source>
</reference>
<reference key="6">
    <citation type="journal article" date="2000" name="J. Biol. Chem.">
        <title>Synucleins are a novel class of substrates for G protein-coupled receptor kinases.</title>
        <authorList>
            <person name="Pronin A.N."/>
            <person name="Morris A.J."/>
            <person name="Surguchov A."/>
            <person name="Benovic J.L."/>
        </authorList>
    </citation>
    <scope>PHOSPHORYLATION AT SER-124 BY BARK1; CAMK2 AND CK2</scope>
</reference>
<reference key="7">
    <citation type="journal article" date="2001" name="Cell Motil. Cytoskeleton">
        <title>Gamma synuclein: subcellular localization in neuronal and non-neuronal cells and effect on signal transduction.</title>
        <authorList>
            <person name="Surguchov A."/>
            <person name="Palazzo R.E."/>
            <person name="Surgucheva I."/>
        </authorList>
    </citation>
    <scope>SUBCELLULAR LOCATION</scope>
</reference>
<reference key="8">
    <citation type="journal article" date="2008" name="Proc. Natl. Acad. Sci. U.S.A.">
        <title>A quantitative atlas of mitotic phosphorylation.</title>
        <authorList>
            <person name="Dephoure N."/>
            <person name="Zhou C."/>
            <person name="Villen J."/>
            <person name="Beausoleil S.A."/>
            <person name="Bakalarski C.E."/>
            <person name="Elledge S.J."/>
            <person name="Gygi S.P."/>
        </authorList>
    </citation>
    <scope>IDENTIFICATION BY MASS SPECTROMETRY [LARGE SCALE ANALYSIS]</scope>
    <source>
        <tissue>Cervix carcinoma</tissue>
    </source>
</reference>
<reference key="9">
    <citation type="journal article" date="2011" name="BMC Syst. Biol.">
        <title>Initial characterization of the human central proteome.</title>
        <authorList>
            <person name="Burkard T.R."/>
            <person name="Planyavsky M."/>
            <person name="Kaupe I."/>
            <person name="Breitwieser F.P."/>
            <person name="Buerckstuemmer T."/>
            <person name="Bennett K.L."/>
            <person name="Superti-Furga G."/>
            <person name="Colinge J."/>
        </authorList>
    </citation>
    <scope>IDENTIFICATION BY MASS SPECTROMETRY [LARGE SCALE ANALYSIS]</scope>
</reference>
<proteinExistence type="evidence at protein level"/>
<organism>
    <name type="scientific">Homo sapiens</name>
    <name type="common">Human</name>
    <dbReference type="NCBI Taxonomy" id="9606"/>
    <lineage>
        <taxon>Eukaryota</taxon>
        <taxon>Metazoa</taxon>
        <taxon>Chordata</taxon>
        <taxon>Craniata</taxon>
        <taxon>Vertebrata</taxon>
        <taxon>Euteleostomi</taxon>
        <taxon>Mammalia</taxon>
        <taxon>Eutheria</taxon>
        <taxon>Euarchontoglires</taxon>
        <taxon>Primates</taxon>
        <taxon>Haplorrhini</taxon>
        <taxon>Catarrhini</taxon>
        <taxon>Hominidae</taxon>
        <taxon>Homo</taxon>
    </lineage>
</organism>
<comment type="function">
    <text evidence="1">Plays a role in neurofilament network integrity. May be involved in modulating axonal architecture during development and in the adult. In vitro, increases the susceptibility of neurofilament-H to calcium-dependent proteases (By similarity). May also function in modulating the keratin network in skin. Activates the MAPK and Elk-1 signal transduction pathway (By similarity).</text>
</comment>
<comment type="subunit">
    <text evidence="1">May be a centrosome-associated protein. Interacts with MYOC; affects its secretion and its aggregation (By similarity).</text>
</comment>
<comment type="interaction">
    <interactant intactId="EBI-1053810">
        <id>O76070</id>
    </interactant>
    <interactant intactId="EBI-710997">
        <id>P54274</id>
        <label>TERF1</label>
    </interactant>
    <organismsDiffer>false</organismsDiffer>
    <experiments>2</experiments>
</comment>
<comment type="subcellular location">
    <subcellularLocation>
        <location evidence="5">Cytoplasm</location>
        <location evidence="5">Perinuclear region</location>
    </subcellularLocation>
    <subcellularLocation>
        <location evidence="5">Cytoplasm</location>
        <location evidence="5">Cytoskeleton</location>
        <location evidence="5">Microtubule organizing center</location>
        <location evidence="5">Centrosome</location>
    </subcellularLocation>
    <subcellularLocation>
        <location evidence="5">Cytoplasm</location>
        <location evidence="5">Cytoskeleton</location>
        <location evidence="5">Spindle</location>
    </subcellularLocation>
    <text>Associated with centrosomes in several interphase cells. In mitotic cells, localized to the poles of the spindle.</text>
</comment>
<comment type="tissue specificity">
    <text>Highly expressed in brain, particularly in the substantia nigra. Also expressed in the corpus callosum, heart, skeletal muscle, ovary, testis, colon and spleen. Weak expression in pancreas, kidney and lung.</text>
</comment>
<comment type="PTM">
    <text evidence="4">Phosphorylated. Phosphorylation by GRK5 appears to occur on residues distinct from the residue phosphorylated by other kinases.</text>
</comment>
<comment type="similarity">
    <text evidence="8">Belongs to the synuclein family.</text>
</comment>
<comment type="online information" name="Atlas of Genetics and Cytogenetics in Oncology and Haematology">
    <link uri="https://atlasgeneticsoncology.org/gene/42343/SNCG"/>
</comment>
<feature type="chain" id="PRO_0000184038" description="Gamma-synuclein">
    <location>
        <begin position="1"/>
        <end position="127"/>
    </location>
</feature>
<feature type="repeat" description="1">
    <location>
        <begin position="20"/>
        <end position="30"/>
    </location>
</feature>
<feature type="repeat" description="2">
    <location>
        <begin position="31"/>
        <end position="41"/>
    </location>
</feature>
<feature type="repeat" description="3; approximate">
    <location>
        <begin position="42"/>
        <end position="56"/>
    </location>
</feature>
<feature type="repeat" description="4">
    <location>
        <begin position="57"/>
        <end position="67"/>
    </location>
</feature>
<feature type="region of interest" description="4 X 11 AA tandem repeats of [EGSA]-K-T-K-[EQ]-[GQ]-V-X(4)">
    <location>
        <begin position="20"/>
        <end position="67"/>
    </location>
</feature>
<feature type="region of interest" description="Disordered" evidence="3">
    <location>
        <begin position="96"/>
        <end position="127"/>
    </location>
</feature>
<feature type="modified residue" description="Phosphoserine" evidence="2">
    <location>
        <position position="67"/>
    </location>
</feature>
<feature type="modified residue" description="Phosphoserine" evidence="2">
    <location>
        <position position="72"/>
    </location>
</feature>
<feature type="modified residue" description="Phosphoserine; by BARK1, CaMK2 and CK2" evidence="4">
    <location>
        <position position="124"/>
    </location>
</feature>
<feature type="sequence variant" id="VAR_007455" description="In dbSNP:rs9864." evidence="6 7">
    <original>E</original>
    <variation>V</variation>
    <location>
        <position position="110"/>
    </location>
</feature>
<feature type="sequence conflict" description="In Ref. 1; AAB64109." evidence="8" ref="1">
    <original>E</original>
    <variation>K</variation>
    <location>
        <position position="13"/>
    </location>
</feature>
<feature type="sequence conflict" description="In Ref. 4; AAL05870." evidence="8" ref="4">
    <original>G</original>
    <variation>D</variation>
    <location>
        <position position="17"/>
    </location>
</feature>
<feature type="sequence conflict" description="In Ref. 1; AAB64109." evidence="8" ref="1">
    <original>E</original>
    <variation>K</variation>
    <location>
        <position position="68"/>
    </location>
</feature>
<keyword id="KW-0963">Cytoplasm</keyword>
<keyword id="KW-0206">Cytoskeleton</keyword>
<keyword id="KW-0597">Phosphoprotein</keyword>
<keyword id="KW-1267">Proteomics identification</keyword>
<keyword id="KW-1185">Reference proteome</keyword>
<keyword id="KW-0677">Repeat</keyword>
<accession>O76070</accession>
<accession>O15104</accession>
<accession>Q96P61</accession>
<name>SYUG_HUMAN</name>
<evidence type="ECO:0000250" key="1"/>
<evidence type="ECO:0000250" key="2">
    <source>
        <dbReference type="UniProtKB" id="Q63544"/>
    </source>
</evidence>
<evidence type="ECO:0000256" key="3">
    <source>
        <dbReference type="SAM" id="MobiDB-lite"/>
    </source>
</evidence>
<evidence type="ECO:0000269" key="4">
    <source>
    </source>
</evidence>
<evidence type="ECO:0000269" key="5">
    <source>
    </source>
</evidence>
<evidence type="ECO:0000269" key="6">
    <source>
    </source>
</evidence>
<evidence type="ECO:0000269" key="7">
    <source>
    </source>
</evidence>
<evidence type="ECO:0000305" key="8"/>
<gene>
    <name type="primary">SNCG</name>
    <name type="synonym">BCSG1</name>
    <name type="synonym">PERSYN</name>
    <name type="synonym">PRSN</name>
</gene>
<dbReference type="EMBL" id="AF010126">
    <property type="protein sequence ID" value="AAB64109.1"/>
    <property type="molecule type" value="mRNA"/>
</dbReference>
<dbReference type="EMBL" id="AF037207">
    <property type="protein sequence ID" value="AAC36586.1"/>
    <property type="molecule type" value="Genomic_DNA"/>
</dbReference>
<dbReference type="EMBL" id="AF017256">
    <property type="protein sequence ID" value="AAC36550.1"/>
    <property type="molecule type" value="mRNA"/>
</dbReference>
<dbReference type="EMBL" id="AF044311">
    <property type="protein sequence ID" value="AAC27738.1"/>
    <property type="molecule type" value="Genomic_DNA"/>
</dbReference>
<dbReference type="EMBL" id="AF411524">
    <property type="protein sequence ID" value="AAL05870.1"/>
    <property type="molecule type" value="mRNA"/>
</dbReference>
<dbReference type="EMBL" id="BC014098">
    <property type="protein sequence ID" value="AAH14098.1"/>
    <property type="molecule type" value="mRNA"/>
</dbReference>
<dbReference type="CCDS" id="CCDS7380.1"/>
<dbReference type="RefSeq" id="NP_001317049.1">
    <property type="nucleotide sequence ID" value="NM_001330120.1"/>
</dbReference>
<dbReference type="RefSeq" id="NP_003078.2">
    <property type="nucleotide sequence ID" value="NM_003087.3"/>
</dbReference>
<dbReference type="RefSeq" id="XP_054222622.1">
    <property type="nucleotide sequence ID" value="XM_054366647.1"/>
</dbReference>
<dbReference type="BMRB" id="O76070"/>
<dbReference type="SMR" id="O76070"/>
<dbReference type="BioGRID" id="112507">
    <property type="interactions" value="71"/>
</dbReference>
<dbReference type="FunCoup" id="O76070">
    <property type="interactions" value="88"/>
</dbReference>
<dbReference type="IntAct" id="O76070">
    <property type="interactions" value="11"/>
</dbReference>
<dbReference type="STRING" id="9606.ENSP00000361087"/>
<dbReference type="TCDB" id="1.C.77.1.3">
    <property type="family name" value="the synuclein (synuclein) family"/>
</dbReference>
<dbReference type="GlyCosmos" id="O76070">
    <property type="glycosylation" value="9 sites, 1 glycan"/>
</dbReference>
<dbReference type="GlyGen" id="O76070">
    <property type="glycosylation" value="10 sites, 1 O-linked glycan (10 sites)"/>
</dbReference>
<dbReference type="iPTMnet" id="O76070"/>
<dbReference type="PhosphoSitePlus" id="O76070"/>
<dbReference type="BioMuta" id="SNCG"/>
<dbReference type="CPTAC" id="CPTAC-133"/>
<dbReference type="CPTAC" id="CPTAC-1459"/>
<dbReference type="CPTAC" id="CPTAC-1460"/>
<dbReference type="CPTAC" id="CPTAC-1461"/>
<dbReference type="CPTAC" id="CPTAC-708"/>
<dbReference type="jPOST" id="O76070"/>
<dbReference type="MassIVE" id="O76070"/>
<dbReference type="PaxDb" id="9606-ENSP00000361087"/>
<dbReference type="PeptideAtlas" id="O76070"/>
<dbReference type="ProteomicsDB" id="50372"/>
<dbReference type="Pumba" id="O76070"/>
<dbReference type="ABCD" id="O76070">
    <property type="antibodies" value="1 sequenced antibody"/>
</dbReference>
<dbReference type="Antibodypedia" id="2808">
    <property type="antibodies" value="462 antibodies from 41 providers"/>
</dbReference>
<dbReference type="CPTC" id="O76070">
    <property type="antibodies" value="3 antibodies"/>
</dbReference>
<dbReference type="DNASU" id="6623"/>
<dbReference type="Ensembl" id="ENST00000372017.4">
    <property type="protein sequence ID" value="ENSP00000361087.3"/>
    <property type="gene ID" value="ENSG00000173267.14"/>
</dbReference>
<dbReference type="GeneID" id="6623"/>
<dbReference type="KEGG" id="hsa:6623"/>
<dbReference type="MANE-Select" id="ENST00000372017.4">
    <property type="protein sequence ID" value="ENSP00000361087.3"/>
    <property type="RefSeq nucleotide sequence ID" value="NM_003087.3"/>
    <property type="RefSeq protein sequence ID" value="NP_003078.2"/>
</dbReference>
<dbReference type="AGR" id="HGNC:11141"/>
<dbReference type="CTD" id="6623"/>
<dbReference type="DisGeNET" id="6623"/>
<dbReference type="GeneCards" id="SNCG"/>
<dbReference type="HGNC" id="HGNC:11141">
    <property type="gene designation" value="SNCG"/>
</dbReference>
<dbReference type="HPA" id="ENSG00000173267">
    <property type="expression patterns" value="Tissue enhanced (adrenal gland, brain)"/>
</dbReference>
<dbReference type="MIM" id="602998">
    <property type="type" value="gene"/>
</dbReference>
<dbReference type="neXtProt" id="NX_O76070"/>
<dbReference type="OpenTargets" id="ENSG00000173267"/>
<dbReference type="PharmGKB" id="PA35989"/>
<dbReference type="VEuPathDB" id="HostDB:ENSG00000173267"/>
<dbReference type="eggNOG" id="ENOG502S3WF">
    <property type="taxonomic scope" value="Eukaryota"/>
</dbReference>
<dbReference type="GeneTree" id="ENSGT00950000183175"/>
<dbReference type="HOGENOM" id="CLU_129378_0_0_1"/>
<dbReference type="InParanoid" id="O76070"/>
<dbReference type="OMA" id="TCERIEV"/>
<dbReference type="OrthoDB" id="9942391at2759"/>
<dbReference type="PAN-GO" id="O76070">
    <property type="GO annotations" value="8 GO annotations based on evolutionary models"/>
</dbReference>
<dbReference type="PhylomeDB" id="O76070"/>
<dbReference type="TreeFam" id="TF332776"/>
<dbReference type="PathwayCommons" id="O76070"/>
<dbReference type="SignaLink" id="O76070"/>
<dbReference type="SIGNOR" id="O76070"/>
<dbReference type="BioGRID-ORCS" id="6623">
    <property type="hits" value="8 hits in 1148 CRISPR screens"/>
</dbReference>
<dbReference type="CD-CODE" id="8C2F96ED">
    <property type="entry name" value="Centrosome"/>
</dbReference>
<dbReference type="ChiTaRS" id="SNCG">
    <property type="organism name" value="human"/>
</dbReference>
<dbReference type="GeneWiki" id="Gamma-synuclein"/>
<dbReference type="GenomeRNAi" id="6623"/>
<dbReference type="Pharos" id="O76070">
    <property type="development level" value="Tbio"/>
</dbReference>
<dbReference type="PRO" id="PR:O76070"/>
<dbReference type="Proteomes" id="UP000005640">
    <property type="component" value="Chromosome 10"/>
</dbReference>
<dbReference type="RNAct" id="O76070">
    <property type="molecule type" value="protein"/>
</dbReference>
<dbReference type="Bgee" id="ENSG00000173267">
    <property type="expression patterns" value="Expressed in right adrenal gland cortex and 146 other cell types or tissues"/>
</dbReference>
<dbReference type="ExpressionAtlas" id="O76070">
    <property type="expression patterns" value="baseline and differential"/>
</dbReference>
<dbReference type="GO" id="GO:0043679">
    <property type="term" value="C:axon terminus"/>
    <property type="evidence" value="ECO:0000318"/>
    <property type="project" value="GO_Central"/>
</dbReference>
<dbReference type="GO" id="GO:0005813">
    <property type="term" value="C:centrosome"/>
    <property type="evidence" value="ECO:0000314"/>
    <property type="project" value="HPA"/>
</dbReference>
<dbReference type="GO" id="GO:0005737">
    <property type="term" value="C:cytoplasm"/>
    <property type="evidence" value="ECO:0000314"/>
    <property type="project" value="ParkinsonsUK-UCL"/>
</dbReference>
<dbReference type="GO" id="GO:0005829">
    <property type="term" value="C:cytosol"/>
    <property type="evidence" value="ECO:0000314"/>
    <property type="project" value="HPA"/>
</dbReference>
<dbReference type="GO" id="GO:0070062">
    <property type="term" value="C:extracellular exosome"/>
    <property type="evidence" value="ECO:0007005"/>
    <property type="project" value="UniProtKB"/>
</dbReference>
<dbReference type="GO" id="GO:0005794">
    <property type="term" value="C:Golgi apparatus"/>
    <property type="evidence" value="ECO:0000314"/>
    <property type="project" value="HPA"/>
</dbReference>
<dbReference type="GO" id="GO:0043025">
    <property type="term" value="C:neuronal cell body"/>
    <property type="evidence" value="ECO:0000318"/>
    <property type="project" value="GO_Central"/>
</dbReference>
<dbReference type="GO" id="GO:0048471">
    <property type="term" value="C:perinuclear region of cytoplasm"/>
    <property type="evidence" value="ECO:0007669"/>
    <property type="project" value="UniProtKB-SubCell"/>
</dbReference>
<dbReference type="GO" id="GO:0005819">
    <property type="term" value="C:spindle"/>
    <property type="evidence" value="ECO:0007669"/>
    <property type="project" value="UniProtKB-SubCell"/>
</dbReference>
<dbReference type="GO" id="GO:1903136">
    <property type="term" value="F:cuprous ion binding"/>
    <property type="evidence" value="ECO:0000318"/>
    <property type="project" value="GO_Central"/>
</dbReference>
<dbReference type="GO" id="GO:0008344">
    <property type="term" value="P:adult locomotory behavior"/>
    <property type="evidence" value="ECO:0007669"/>
    <property type="project" value="Ensembl"/>
</dbReference>
<dbReference type="GO" id="GO:0007268">
    <property type="term" value="P:chemical synaptic transmission"/>
    <property type="evidence" value="ECO:0000318"/>
    <property type="project" value="GO_Central"/>
</dbReference>
<dbReference type="GO" id="GO:0009306">
    <property type="term" value="P:protein secretion"/>
    <property type="evidence" value="ECO:0007669"/>
    <property type="project" value="Ensembl"/>
</dbReference>
<dbReference type="GO" id="GO:0014059">
    <property type="term" value="P:regulation of dopamine secretion"/>
    <property type="evidence" value="ECO:0007669"/>
    <property type="project" value="Ensembl"/>
</dbReference>
<dbReference type="GO" id="GO:0046928">
    <property type="term" value="P:regulation of neurotransmitter secretion"/>
    <property type="evidence" value="ECO:0007669"/>
    <property type="project" value="Ensembl"/>
</dbReference>
<dbReference type="GO" id="GO:0050808">
    <property type="term" value="P:synapse organization"/>
    <property type="evidence" value="ECO:0000318"/>
    <property type="project" value="GO_Central"/>
</dbReference>
<dbReference type="GO" id="GO:0048488">
    <property type="term" value="P:synaptic vesicle endocytosis"/>
    <property type="evidence" value="ECO:0000318"/>
    <property type="project" value="GO_Central"/>
</dbReference>
<dbReference type="DisProt" id="DP00630"/>
<dbReference type="FunFam" id="1.10.287.700:FF:000002">
    <property type="entry name" value="Gamma-synuclein"/>
    <property type="match status" value="1"/>
</dbReference>
<dbReference type="Gene3D" id="1.10.287.700">
    <property type="entry name" value="Helix hairpin bin"/>
    <property type="match status" value="1"/>
</dbReference>
<dbReference type="InterPro" id="IPR001058">
    <property type="entry name" value="Synuclein"/>
</dbReference>
<dbReference type="InterPro" id="IPR002462">
    <property type="entry name" value="Synuclein_gamma"/>
</dbReference>
<dbReference type="PANTHER" id="PTHR13820:SF10">
    <property type="entry name" value="GAMMA-SYNUCLEIN"/>
    <property type="match status" value="1"/>
</dbReference>
<dbReference type="PANTHER" id="PTHR13820">
    <property type="entry name" value="SYNUCLEIN"/>
    <property type="match status" value="1"/>
</dbReference>
<dbReference type="Pfam" id="PF01387">
    <property type="entry name" value="Synuclein"/>
    <property type="match status" value="1"/>
</dbReference>
<dbReference type="PRINTS" id="PR01214">
    <property type="entry name" value="GSYNUCLEIN"/>
</dbReference>
<dbReference type="PRINTS" id="PR01211">
    <property type="entry name" value="SYNUCLEIN"/>
</dbReference>
<dbReference type="SUPFAM" id="SSF118375">
    <property type="entry name" value="Synuclein"/>
    <property type="match status" value="1"/>
</dbReference>
<sequence>MDVFKKGFSIAKEGVVGAVEKTKQGVTEAAEKTKEGVMYVGAKTKENVVQSVTSVAEKTKEQANAVSEAVVSSVNTVATKTVEEAENIAVTSGVVRKEDLRPSAPQQEGEASKEKEEVAEEAQSGGD</sequence>
<protein>
    <recommendedName>
        <fullName>Gamma-synuclein</fullName>
    </recommendedName>
    <alternativeName>
        <fullName>Breast cancer-specific gene 1 protein</fullName>
    </alternativeName>
    <alternativeName>
        <fullName>Persyn</fullName>
    </alternativeName>
    <alternativeName>
        <fullName>Synoretin</fullName>
        <shortName>SR</shortName>
    </alternativeName>
</protein>